<sequence>MSLDGVWAPQTANIGDGPAKKASDQASMQTQVLQTASLKDGPAKRAVWVRRDNAETEDPVKSTMSKDRPRLEVTKAVVVDLGTGFCKCGFAGLPKPTHKISTTVGKPYMETAKTGDNRKETFVGHELFNPDIHLKLVNPLRHGIIVDWDTVQDIWEYLFRQEMKIAPEEHAVLVSDPPLSPHTNREKYAEMLFETFNTPAMHIAYQSRLSMYSYGRTSGLVVEVGHGVSYVVPIYEGYPLPSITGRLDYAGSDLTTYLMNLMNNSGKHFSEDHLGIVEDIKTRCCFVALDPIEEKKIPAPEHEIHYTLPDGKEIRLGQERFLCSEMFFKPSLIKSMQLGLHTQTVSCLNKCDIALKRDLMGNILLCGGSTMLRGFPNRLQKELSSMCPNDTPQVNVLPERDTAVWTGGSILASLQGFQPLWVHRLEYEEHGPFFLYRRCF</sequence>
<accession>Q9QY84</accession>
<accession>A2AMK4</accession>
<accession>Q9D9P4</accession>
<accession>Q9JMI5</accession>
<comment type="function">
    <text evidence="6 7 8 9">Essential for normal spermatogenesis and male fertility (PubMed:35921706, PubMed:36734600, PubMed:37667331). Required for normal sperm head morphology, acroplaxome formation, acrosome attachment, and acrosome granule stability (PubMed:36734600, PubMed:37667331). May anchor and stabilize acrosomal adherence to the acroplaxome at least in part by facilitating the presence of F-actin in the subacrosomal space (PubMed:36734600). May play an important role in formation and fusion of Golgi-derived vesicles during acrosome biogenesis (PubMed:32923619).</text>
</comment>
<comment type="subunit">
    <text evidence="1 10">Interacts (via N-terminus) with TES (via LIM domain 2) (By similarity). Heterodimer with TES; the heterodimer interacts with ENAH to form a heterotrimer (By similarity). Interacts with ACTL9 (By similarity). Interacts with CYLC1; the interaction may be relevant for proper acrosome attachment to the nuclear envelope (PubMed:38573307).</text>
</comment>
<comment type="subcellular location">
    <subcellularLocation>
        <location evidence="5">Cytoplasm</location>
        <location evidence="5">Cytoskeleton</location>
    </subcellularLocation>
    <subcellularLocation>
        <location evidence="5">Golgi apparatus</location>
    </subcellularLocation>
    <subcellularLocation>
        <location evidence="3 8">Cytoplasm</location>
    </subcellularLocation>
    <subcellularLocation>
        <location evidence="3 5 8">Nucleus</location>
    </subcellularLocation>
    <subcellularLocation>
        <location evidence="5">Cytoplasmic vesicle</location>
        <location evidence="5">Secretory vesicle</location>
        <location evidence="5">Acrosome</location>
    </subcellularLocation>
    <text>Detected at the Golgi apparatus during acrosome biogenesis (PubMed:21278383). Detected at the subacrosomal layer in round spermatids (PubMed:21278383). Detected in sperm head and tail (PubMed:21278383).</text>
</comment>
<comment type="tissue specificity">
    <text evidence="3 4 5 8">Detected in testis. Detected at the acrosome of round spermatids (at protein level). Detected in adult and embryonic testis. Detected in developing male germ cells.</text>
</comment>
<comment type="disruption phenotype">
    <text evidence="7 8 9">Male mice are infertile with consistent head and acrosomal morphological defects in sperm (PubMed:35921706, PubMed:36734600, PubMed:37667331). Sperms show a smaller head size due to total damage of the acrosome-acroplaxome-manchette complex (PubMed:37667331). Exhibit disruption of acrosomal biogenesis with abnormal migration of the acrosomal granule and a complete loss of subacrosomal filamentous actin (F-actin) structures in spermatids (PubMed:36734600).</text>
</comment>
<comment type="similarity">
    <text evidence="11">Belongs to the actin family.</text>
</comment>
<name>ACL7A_MOUSE</name>
<organism>
    <name type="scientific">Mus musculus</name>
    <name type="common">Mouse</name>
    <dbReference type="NCBI Taxonomy" id="10090"/>
    <lineage>
        <taxon>Eukaryota</taxon>
        <taxon>Metazoa</taxon>
        <taxon>Chordata</taxon>
        <taxon>Craniata</taxon>
        <taxon>Vertebrata</taxon>
        <taxon>Euteleostomi</taxon>
        <taxon>Mammalia</taxon>
        <taxon>Eutheria</taxon>
        <taxon>Euarchontoglires</taxon>
        <taxon>Glires</taxon>
        <taxon>Rodentia</taxon>
        <taxon>Myomorpha</taxon>
        <taxon>Muroidea</taxon>
        <taxon>Muridae</taxon>
        <taxon>Murinae</taxon>
        <taxon>Mus</taxon>
        <taxon>Mus</taxon>
    </lineage>
</organism>
<keyword id="KW-0963">Cytoplasm</keyword>
<keyword id="KW-0968">Cytoplasmic vesicle</keyword>
<keyword id="KW-0206">Cytoskeleton</keyword>
<keyword id="KW-0221">Differentiation</keyword>
<keyword id="KW-0278">Fertilization</keyword>
<keyword id="KW-0333">Golgi apparatus</keyword>
<keyword id="KW-0539">Nucleus</keyword>
<keyword id="KW-1185">Reference proteome</keyword>
<keyword id="KW-0744">Spermatogenesis</keyword>
<feature type="chain" id="PRO_0000089138" description="Actin-like protein 7A">
    <location>
        <begin position="1"/>
        <end position="440"/>
    </location>
</feature>
<feature type="region of interest" description="Disordered" evidence="2">
    <location>
        <begin position="1"/>
        <end position="29"/>
    </location>
</feature>
<feature type="region of interest" description="Required for interaction with TES" evidence="1">
    <location>
        <begin position="36"/>
        <end position="56"/>
    </location>
</feature>
<feature type="mutagenesis site" description="Homozygous knockin male mice are infertile. The spermatogenesis process is normal. However spermatozoa dysplay acrosomal ultrastructural defects. Complete absence of the ACTL7A protein in both testes and sperms. Abnormal distribution of PLCZ1 in sperms." evidence="6">
    <original>A</original>
    <variation>T</variation>
    <location>
        <position position="250"/>
    </location>
</feature>
<feature type="sequence conflict" description="In Ref. 4; BAB24681." evidence="11" ref="4">
    <original>DPPLSP</original>
    <variation>VTPREC</variation>
    <location>
        <begin position="176"/>
        <end position="181"/>
    </location>
</feature>
<feature type="sequence conflict" description="In Ref. 4; BAB24681." evidence="11" ref="4">
    <original>V</original>
    <variation>D</variation>
    <location>
        <position position="224"/>
    </location>
</feature>
<feature type="sequence conflict" description="In Ref. 4; BAB24681." evidence="11" ref="4">
    <original>D</original>
    <variation>T</variation>
    <location>
        <position position="290"/>
    </location>
</feature>
<feature type="sequence conflict" description="In Ref. 2; BAA90822." evidence="11" ref="2">
    <original>F</original>
    <variation>S</variation>
    <location>
        <position position="328"/>
    </location>
</feature>
<feature type="sequence conflict" description="In Ref. 4; BAB24681." evidence="11" ref="4">
    <original>R</original>
    <variation>G</variation>
    <location>
        <position position="373"/>
    </location>
</feature>
<dbReference type="EMBL" id="AF113519">
    <property type="protein sequence ID" value="AAF18298.1"/>
    <property type="molecule type" value="mRNA"/>
</dbReference>
<dbReference type="EMBL" id="AB023063">
    <property type="protein sequence ID" value="BAA90822.1"/>
    <property type="molecule type" value="mRNA"/>
</dbReference>
<dbReference type="EMBL" id="AB079643">
    <property type="protein sequence ID" value="BAC07297.1"/>
    <property type="molecule type" value="Genomic_DNA"/>
</dbReference>
<dbReference type="EMBL" id="AL807762">
    <property type="status" value="NOT_ANNOTATED_CDS"/>
    <property type="molecule type" value="Genomic_DNA"/>
</dbReference>
<dbReference type="EMBL" id="CH466565">
    <property type="protein sequence ID" value="EDL02258.1"/>
    <property type="molecule type" value="Genomic_DNA"/>
</dbReference>
<dbReference type="EMBL" id="AK006631">
    <property type="protein sequence ID" value="BAB24681.1"/>
    <property type="molecule type" value="mRNA"/>
</dbReference>
<dbReference type="EMBL" id="BC049610">
    <property type="protein sequence ID" value="AAH49610.1"/>
    <property type="molecule type" value="mRNA"/>
</dbReference>
<dbReference type="CCDS" id="CCDS18197.1"/>
<dbReference type="RefSeq" id="NP_033741.1">
    <property type="nucleotide sequence ID" value="NM_009611.3"/>
</dbReference>
<dbReference type="SMR" id="Q9QY84"/>
<dbReference type="FunCoup" id="Q9QY84">
    <property type="interactions" value="9"/>
</dbReference>
<dbReference type="STRING" id="10090.ENSMUSP00000092692"/>
<dbReference type="GlyGen" id="Q9QY84">
    <property type="glycosylation" value="1 site, 1 O-linked glycan (1 site)"/>
</dbReference>
<dbReference type="iPTMnet" id="Q9QY84"/>
<dbReference type="PhosphoSitePlus" id="Q9QY84"/>
<dbReference type="SwissPalm" id="Q9QY84"/>
<dbReference type="jPOST" id="Q9QY84"/>
<dbReference type="PaxDb" id="10090-ENSMUSP00000092692"/>
<dbReference type="ProteomicsDB" id="285705"/>
<dbReference type="Antibodypedia" id="14911">
    <property type="antibodies" value="161 antibodies from 24 providers"/>
</dbReference>
<dbReference type="DNASU" id="11470"/>
<dbReference type="Ensembl" id="ENSMUST00000095079.6">
    <property type="protein sequence ID" value="ENSMUSP00000092692.5"/>
    <property type="gene ID" value="ENSMUSG00000070979.6"/>
</dbReference>
<dbReference type="GeneID" id="11470"/>
<dbReference type="KEGG" id="mmu:11470"/>
<dbReference type="UCSC" id="uc008sxo.2">
    <property type="organism name" value="mouse"/>
</dbReference>
<dbReference type="AGR" id="MGI:1343051"/>
<dbReference type="CTD" id="10881"/>
<dbReference type="MGI" id="MGI:1343051">
    <property type="gene designation" value="Actl7a"/>
</dbReference>
<dbReference type="VEuPathDB" id="HostDB:ENSMUSG00000070979"/>
<dbReference type="eggNOG" id="KOG0676">
    <property type="taxonomic scope" value="Eukaryota"/>
</dbReference>
<dbReference type="GeneTree" id="ENSGT00940000162158"/>
<dbReference type="HOGENOM" id="CLU_027965_0_2_1"/>
<dbReference type="InParanoid" id="Q9QY84"/>
<dbReference type="OMA" id="DMWEYLF"/>
<dbReference type="OrthoDB" id="9925380at2759"/>
<dbReference type="PhylomeDB" id="Q9QY84"/>
<dbReference type="TreeFam" id="TF354237"/>
<dbReference type="BioGRID-ORCS" id="11470">
    <property type="hits" value="1 hit in 76 CRISPR screens"/>
</dbReference>
<dbReference type="ChiTaRS" id="Actl7a">
    <property type="organism name" value="mouse"/>
</dbReference>
<dbReference type="PRO" id="PR:Q9QY84"/>
<dbReference type="Proteomes" id="UP000000589">
    <property type="component" value="Chromosome 4"/>
</dbReference>
<dbReference type="RNAct" id="Q9QY84">
    <property type="molecule type" value="protein"/>
</dbReference>
<dbReference type="Bgee" id="ENSMUSG00000070979">
    <property type="expression patterns" value="Expressed in spermatid and 6 other cell types or tissues"/>
</dbReference>
<dbReference type="GO" id="GO:0001669">
    <property type="term" value="C:acrosomal vesicle"/>
    <property type="evidence" value="ECO:0000315"/>
    <property type="project" value="UniProtKB"/>
</dbReference>
<dbReference type="GO" id="GO:0005737">
    <property type="term" value="C:cytoplasm"/>
    <property type="evidence" value="ECO:0000314"/>
    <property type="project" value="UniProtKB"/>
</dbReference>
<dbReference type="GO" id="GO:0005856">
    <property type="term" value="C:cytoskeleton"/>
    <property type="evidence" value="ECO:0007669"/>
    <property type="project" value="UniProtKB-SubCell"/>
</dbReference>
<dbReference type="GO" id="GO:0005794">
    <property type="term" value="C:Golgi apparatus"/>
    <property type="evidence" value="ECO:0007669"/>
    <property type="project" value="UniProtKB-SubCell"/>
</dbReference>
<dbReference type="GO" id="GO:0001673">
    <property type="term" value="C:male germ cell nucleus"/>
    <property type="evidence" value="ECO:0000314"/>
    <property type="project" value="MGI"/>
</dbReference>
<dbReference type="GO" id="GO:0031514">
    <property type="term" value="C:motile cilium"/>
    <property type="evidence" value="ECO:0000314"/>
    <property type="project" value="MGI"/>
</dbReference>
<dbReference type="GO" id="GO:0005634">
    <property type="term" value="C:nucleus"/>
    <property type="evidence" value="ECO:0000314"/>
    <property type="project" value="UniProtKB"/>
</dbReference>
<dbReference type="GO" id="GO:0032991">
    <property type="term" value="C:protein-containing complex"/>
    <property type="evidence" value="ECO:0007669"/>
    <property type="project" value="Ensembl"/>
</dbReference>
<dbReference type="GO" id="GO:0001675">
    <property type="term" value="P:acrosome assembly"/>
    <property type="evidence" value="ECO:0000315"/>
    <property type="project" value="UniProtKB"/>
</dbReference>
<dbReference type="GO" id="GO:0009566">
    <property type="term" value="P:fertilization"/>
    <property type="evidence" value="ECO:0000315"/>
    <property type="project" value="UniProtKB"/>
</dbReference>
<dbReference type="GO" id="GO:0007338">
    <property type="term" value="P:single fertilization"/>
    <property type="evidence" value="ECO:0007669"/>
    <property type="project" value="UniProtKB-KW"/>
</dbReference>
<dbReference type="GO" id="GO:0007286">
    <property type="term" value="P:spermatid development"/>
    <property type="evidence" value="ECO:0000315"/>
    <property type="project" value="UniProtKB"/>
</dbReference>
<dbReference type="CDD" id="cd10214">
    <property type="entry name" value="ASKHA_NBD_ACTL7"/>
    <property type="match status" value="1"/>
</dbReference>
<dbReference type="FunFam" id="3.90.640.10:FF:000007">
    <property type="entry name" value="Actin like 7B"/>
    <property type="match status" value="1"/>
</dbReference>
<dbReference type="FunFam" id="3.30.420.40:FF:000050">
    <property type="entry name" value="Actin, alpha skeletal muscle"/>
    <property type="match status" value="1"/>
</dbReference>
<dbReference type="Gene3D" id="3.30.420.40">
    <property type="match status" value="2"/>
</dbReference>
<dbReference type="Gene3D" id="3.90.640.10">
    <property type="entry name" value="Actin, Chain A, domain 4"/>
    <property type="match status" value="1"/>
</dbReference>
<dbReference type="InterPro" id="IPR004000">
    <property type="entry name" value="Actin"/>
</dbReference>
<dbReference type="InterPro" id="IPR031769">
    <property type="entry name" value="ACTL7A_N"/>
</dbReference>
<dbReference type="InterPro" id="IPR043129">
    <property type="entry name" value="ATPase_NBD"/>
</dbReference>
<dbReference type="PANTHER" id="PTHR11937">
    <property type="entry name" value="ACTIN"/>
    <property type="match status" value="1"/>
</dbReference>
<dbReference type="Pfam" id="PF00022">
    <property type="entry name" value="Actin"/>
    <property type="match status" value="1"/>
</dbReference>
<dbReference type="Pfam" id="PF16840">
    <property type="entry name" value="ACTL7A_N"/>
    <property type="match status" value="1"/>
</dbReference>
<dbReference type="PRINTS" id="PR00190">
    <property type="entry name" value="ACTIN"/>
</dbReference>
<dbReference type="SMART" id="SM00268">
    <property type="entry name" value="ACTIN"/>
    <property type="match status" value="1"/>
</dbReference>
<dbReference type="SUPFAM" id="SSF53067">
    <property type="entry name" value="Actin-like ATPase domain"/>
    <property type="match status" value="2"/>
</dbReference>
<gene>
    <name type="primary">Actl7a</name>
    <name type="synonym">Tact2</name>
</gene>
<proteinExistence type="evidence at protein level"/>
<reference key="1">
    <citation type="journal article" date="1999" name="Genomics">
        <title>Cloning, mapping, and expression of two novel actin genes, actin-like-7A (ACTL7A) and actin-like-7B (ACTL7B), from the familial dysautonomia candidate region on 9q31.</title>
        <authorList>
            <person name="Chadwick B.P."/>
            <person name="Mull J."/>
            <person name="Helbling L.A."/>
            <person name="Gill S."/>
            <person name="Leyne M."/>
            <person name="Robbins C.M."/>
            <person name="Pinkett H.W."/>
            <person name="Makalowska I."/>
            <person name="Maayan C."/>
            <person name="Blumenfeld A."/>
            <person name="Axelrod F.B."/>
            <person name="Brownstein M."/>
            <person name="Gusella J.F."/>
            <person name="Slaugenhaupt S.A."/>
        </authorList>
    </citation>
    <scope>NUCLEOTIDE SEQUENCE [MRNA]</scope>
    <source>
        <strain>CD-1</strain>
        <tissue>Testis</tissue>
    </source>
</reference>
<reference key="2">
    <citation type="submission" date="1999-01" db="EMBL/GenBank/DDBJ databases">
        <title>Testis specific actin.</title>
        <authorList>
            <person name="Tanaka H."/>
            <person name="Iguchi N."/>
            <person name="Carvalho C.E."/>
            <person name="Nozaki M."/>
            <person name="Nojima H."/>
            <person name="Nishimune Y."/>
        </authorList>
    </citation>
    <scope>NUCLEOTIDE SEQUENCE [MRNA]</scope>
    <source>
        <tissue>Testis</tissue>
    </source>
</reference>
<reference key="3">
    <citation type="journal article" date="2003" name="Mol. Reprod. Dev.">
        <title>Genomic structure and promoter activity of the testis haploid germ cell-specific intronless genes, Tact1 and Tact2.</title>
        <authorList>
            <person name="Hisano M."/>
            <person name="Yamada S."/>
            <person name="Tanaka H."/>
            <person name="Nishimune Y."/>
            <person name="Nozaki M."/>
        </authorList>
    </citation>
    <scope>NUCLEOTIDE SEQUENCE [GENOMIC DNA]</scope>
    <scope>TISSUE SPECIFICITY</scope>
    <source>
        <strain>129/Sv</strain>
        <tissue>Liver</tissue>
    </source>
</reference>
<reference key="4">
    <citation type="journal article" date="2005" name="Science">
        <title>The transcriptional landscape of the mammalian genome.</title>
        <authorList>
            <person name="Carninci P."/>
            <person name="Kasukawa T."/>
            <person name="Katayama S."/>
            <person name="Gough J."/>
            <person name="Frith M.C."/>
            <person name="Maeda N."/>
            <person name="Oyama R."/>
            <person name="Ravasi T."/>
            <person name="Lenhard B."/>
            <person name="Wells C."/>
            <person name="Kodzius R."/>
            <person name="Shimokawa K."/>
            <person name="Bajic V.B."/>
            <person name="Brenner S.E."/>
            <person name="Batalov S."/>
            <person name="Forrest A.R."/>
            <person name="Zavolan M."/>
            <person name="Davis M.J."/>
            <person name="Wilming L.G."/>
            <person name="Aidinis V."/>
            <person name="Allen J.E."/>
            <person name="Ambesi-Impiombato A."/>
            <person name="Apweiler R."/>
            <person name="Aturaliya R.N."/>
            <person name="Bailey T.L."/>
            <person name="Bansal M."/>
            <person name="Baxter L."/>
            <person name="Beisel K.W."/>
            <person name="Bersano T."/>
            <person name="Bono H."/>
            <person name="Chalk A.M."/>
            <person name="Chiu K.P."/>
            <person name="Choudhary V."/>
            <person name="Christoffels A."/>
            <person name="Clutterbuck D.R."/>
            <person name="Crowe M.L."/>
            <person name="Dalla E."/>
            <person name="Dalrymple B.P."/>
            <person name="de Bono B."/>
            <person name="Della Gatta G."/>
            <person name="di Bernardo D."/>
            <person name="Down T."/>
            <person name="Engstrom P."/>
            <person name="Fagiolini M."/>
            <person name="Faulkner G."/>
            <person name="Fletcher C.F."/>
            <person name="Fukushima T."/>
            <person name="Furuno M."/>
            <person name="Futaki S."/>
            <person name="Gariboldi M."/>
            <person name="Georgii-Hemming P."/>
            <person name="Gingeras T.R."/>
            <person name="Gojobori T."/>
            <person name="Green R.E."/>
            <person name="Gustincich S."/>
            <person name="Harbers M."/>
            <person name="Hayashi Y."/>
            <person name="Hensch T.K."/>
            <person name="Hirokawa N."/>
            <person name="Hill D."/>
            <person name="Huminiecki L."/>
            <person name="Iacono M."/>
            <person name="Ikeo K."/>
            <person name="Iwama A."/>
            <person name="Ishikawa T."/>
            <person name="Jakt M."/>
            <person name="Kanapin A."/>
            <person name="Katoh M."/>
            <person name="Kawasawa Y."/>
            <person name="Kelso J."/>
            <person name="Kitamura H."/>
            <person name="Kitano H."/>
            <person name="Kollias G."/>
            <person name="Krishnan S.P."/>
            <person name="Kruger A."/>
            <person name="Kummerfeld S.K."/>
            <person name="Kurochkin I.V."/>
            <person name="Lareau L.F."/>
            <person name="Lazarevic D."/>
            <person name="Lipovich L."/>
            <person name="Liu J."/>
            <person name="Liuni S."/>
            <person name="McWilliam S."/>
            <person name="Madan Babu M."/>
            <person name="Madera M."/>
            <person name="Marchionni L."/>
            <person name="Matsuda H."/>
            <person name="Matsuzawa S."/>
            <person name="Miki H."/>
            <person name="Mignone F."/>
            <person name="Miyake S."/>
            <person name="Morris K."/>
            <person name="Mottagui-Tabar S."/>
            <person name="Mulder N."/>
            <person name="Nakano N."/>
            <person name="Nakauchi H."/>
            <person name="Ng P."/>
            <person name="Nilsson R."/>
            <person name="Nishiguchi S."/>
            <person name="Nishikawa S."/>
            <person name="Nori F."/>
            <person name="Ohara O."/>
            <person name="Okazaki Y."/>
            <person name="Orlando V."/>
            <person name="Pang K.C."/>
            <person name="Pavan W.J."/>
            <person name="Pavesi G."/>
            <person name="Pesole G."/>
            <person name="Petrovsky N."/>
            <person name="Piazza S."/>
            <person name="Reed J."/>
            <person name="Reid J.F."/>
            <person name="Ring B.Z."/>
            <person name="Ringwald M."/>
            <person name="Rost B."/>
            <person name="Ruan Y."/>
            <person name="Salzberg S.L."/>
            <person name="Sandelin A."/>
            <person name="Schneider C."/>
            <person name="Schoenbach C."/>
            <person name="Sekiguchi K."/>
            <person name="Semple C.A."/>
            <person name="Seno S."/>
            <person name="Sessa L."/>
            <person name="Sheng Y."/>
            <person name="Shibata Y."/>
            <person name="Shimada H."/>
            <person name="Shimada K."/>
            <person name="Silva D."/>
            <person name="Sinclair B."/>
            <person name="Sperling S."/>
            <person name="Stupka E."/>
            <person name="Sugiura K."/>
            <person name="Sultana R."/>
            <person name="Takenaka Y."/>
            <person name="Taki K."/>
            <person name="Tammoja K."/>
            <person name="Tan S.L."/>
            <person name="Tang S."/>
            <person name="Taylor M.S."/>
            <person name="Tegner J."/>
            <person name="Teichmann S.A."/>
            <person name="Ueda H.R."/>
            <person name="van Nimwegen E."/>
            <person name="Verardo R."/>
            <person name="Wei C.L."/>
            <person name="Yagi K."/>
            <person name="Yamanishi H."/>
            <person name="Zabarovsky E."/>
            <person name="Zhu S."/>
            <person name="Zimmer A."/>
            <person name="Hide W."/>
            <person name="Bult C."/>
            <person name="Grimmond S.M."/>
            <person name="Teasdale R.D."/>
            <person name="Liu E.T."/>
            <person name="Brusic V."/>
            <person name="Quackenbush J."/>
            <person name="Wahlestedt C."/>
            <person name="Mattick J.S."/>
            <person name="Hume D.A."/>
            <person name="Kai C."/>
            <person name="Sasaki D."/>
            <person name="Tomaru Y."/>
            <person name="Fukuda S."/>
            <person name="Kanamori-Katayama M."/>
            <person name="Suzuki M."/>
            <person name="Aoki J."/>
            <person name="Arakawa T."/>
            <person name="Iida J."/>
            <person name="Imamura K."/>
            <person name="Itoh M."/>
            <person name="Kato T."/>
            <person name="Kawaji H."/>
            <person name="Kawagashira N."/>
            <person name="Kawashima T."/>
            <person name="Kojima M."/>
            <person name="Kondo S."/>
            <person name="Konno H."/>
            <person name="Nakano K."/>
            <person name="Ninomiya N."/>
            <person name="Nishio T."/>
            <person name="Okada M."/>
            <person name="Plessy C."/>
            <person name="Shibata K."/>
            <person name="Shiraki T."/>
            <person name="Suzuki S."/>
            <person name="Tagami M."/>
            <person name="Waki K."/>
            <person name="Watahiki A."/>
            <person name="Okamura-Oho Y."/>
            <person name="Suzuki H."/>
            <person name="Kawai J."/>
            <person name="Hayashizaki Y."/>
        </authorList>
    </citation>
    <scope>NUCLEOTIDE SEQUENCE [LARGE SCALE MRNA]</scope>
    <source>
        <strain>C57BL/6J</strain>
        <tissue>Testis</tissue>
    </source>
</reference>
<reference key="5">
    <citation type="journal article" date="2009" name="PLoS Biol.">
        <title>Lineage-specific biology revealed by a finished genome assembly of the mouse.</title>
        <authorList>
            <person name="Church D.M."/>
            <person name="Goodstadt L."/>
            <person name="Hillier L.W."/>
            <person name="Zody M.C."/>
            <person name="Goldstein S."/>
            <person name="She X."/>
            <person name="Bult C.J."/>
            <person name="Agarwala R."/>
            <person name="Cherry J.L."/>
            <person name="DiCuccio M."/>
            <person name="Hlavina W."/>
            <person name="Kapustin Y."/>
            <person name="Meric P."/>
            <person name="Maglott D."/>
            <person name="Birtle Z."/>
            <person name="Marques A.C."/>
            <person name="Graves T."/>
            <person name="Zhou S."/>
            <person name="Teague B."/>
            <person name="Potamousis K."/>
            <person name="Churas C."/>
            <person name="Place M."/>
            <person name="Herschleb J."/>
            <person name="Runnheim R."/>
            <person name="Forrest D."/>
            <person name="Amos-Landgraf J."/>
            <person name="Schwartz D.C."/>
            <person name="Cheng Z."/>
            <person name="Lindblad-Toh K."/>
            <person name="Eichler E.E."/>
            <person name="Ponting C.P."/>
        </authorList>
    </citation>
    <scope>NUCLEOTIDE SEQUENCE [LARGE SCALE GENOMIC DNA]</scope>
    <source>
        <strain>C57BL/6J</strain>
    </source>
</reference>
<reference key="6">
    <citation type="submission" date="2009-01" db="EMBL/GenBank/DDBJ databases">
        <authorList>
            <person name="Mural R.J."/>
            <person name="Adams M.D."/>
            <person name="Myers E.W."/>
            <person name="Smith H.O."/>
            <person name="Venter J.C."/>
        </authorList>
    </citation>
    <scope>NUCLEOTIDE SEQUENCE [LARGE SCALE GENOMIC DNA]</scope>
</reference>
<reference key="7">
    <citation type="journal article" date="2004" name="Genome Res.">
        <title>The status, quality, and expansion of the NIH full-length cDNA project: the Mammalian Gene Collection (MGC).</title>
        <authorList>
            <consortium name="The MGC Project Team"/>
        </authorList>
    </citation>
    <scope>NUCLEOTIDE SEQUENCE [LARGE SCALE MRNA]</scope>
    <source>
        <tissue>Testis</tissue>
    </source>
</reference>
<reference key="8">
    <citation type="journal article" date="2003" name="Biol. Reprod.">
        <title>Novel actin-like proteins T-ACTIN 1 and T-ACTIN 2 are differentially expressed in the cytoplasm and nucleus of mouse haploid germ cells.</title>
        <authorList>
            <person name="Tanaka H."/>
            <person name="Iguchi N."/>
            <person name="Egydio de Carvalho C."/>
            <person name="Tadokoro Y."/>
            <person name="Yomogida K."/>
            <person name="Nishimune Y."/>
        </authorList>
    </citation>
    <scope>SUBCELLULAR LOCATION</scope>
    <scope>TISSUE SPECIFICITY</scope>
</reference>
<reference key="9">
    <citation type="journal article" date="2010" name="Cell">
        <title>A tissue-specific atlas of mouse protein phosphorylation and expression.</title>
        <authorList>
            <person name="Huttlin E.L."/>
            <person name="Jedrychowski M.P."/>
            <person name="Elias J.E."/>
            <person name="Goswami T."/>
            <person name="Rad R."/>
            <person name="Beausoleil S.A."/>
            <person name="Villen J."/>
            <person name="Haas W."/>
            <person name="Sowa M.E."/>
            <person name="Gygi S.P."/>
        </authorList>
    </citation>
    <scope>IDENTIFICATION BY MASS SPECTROMETRY [LARGE SCALE ANALYSIS]</scope>
    <source>
        <tissue>Testis</tissue>
    </source>
</reference>
<reference key="10">
    <citation type="journal article" date="2011" name="J. Biol. Chem.">
        <title>Molecular recognition of the Tes LIM2-3 domains by the actin-related protein Arp7A.</title>
        <authorList>
            <person name="Boeda B."/>
            <person name="Knowles P.P."/>
            <person name="Briggs D.C."/>
            <person name="Murray-Rust J."/>
            <person name="Soriano E."/>
            <person name="Garvalov B.K."/>
            <person name="McDonald N.Q."/>
            <person name="Way M."/>
        </authorList>
    </citation>
    <scope>SUBCELLULAR LOCATION</scope>
    <scope>TISSUE SPECIFICITY</scope>
</reference>
<reference key="11">
    <citation type="journal article" date="2020" name="Sci. Adv.">
        <title>Disruption in ACTL7A causes acrosomal ultrastructural defects in human and mouse sperm as a novel male factor inducing early embryonic arrest.</title>
        <authorList>
            <person name="Xin A."/>
            <person name="Qu R."/>
            <person name="Chen G."/>
            <person name="Zhang L."/>
            <person name="Chen J."/>
            <person name="Tao C."/>
            <person name="Fu J."/>
            <person name="Tang J."/>
            <person name="Ru Y."/>
            <person name="Chen Y."/>
            <person name="Peng X."/>
            <person name="Shi H."/>
            <person name="Zhang F."/>
            <person name="Sun X."/>
        </authorList>
    </citation>
    <scope>MUTAGENESIS OF ALA-250</scope>
    <scope>FUNCTION</scope>
</reference>
<reference key="12">
    <citation type="journal article" date="2022" name="Biochem. Biophys. Res. Commun.">
        <title>Actl7a deficiency in mice leads to male infertility and fertilization failure.</title>
        <authorList>
            <person name="Zhou X."/>
            <person name="Liu Z."/>
            <person name="Jia W."/>
            <person name="Hou M."/>
            <person name="Zhang X."/>
        </authorList>
    </citation>
    <scope>FUNCTION</scope>
    <scope>DISRUPTION PHENOTYPE</scope>
</reference>
<reference key="13">
    <citation type="journal article" date="2023" name="Mol. Hum. Reprod.">
        <title>Testis-specific actin-like 7A (ACTL7A) is an indispensable protein for subacrosomal-associated F-actin formation, acrosomal anchoring, and male fertility.</title>
        <authorList>
            <person name="Ferrer P."/>
            <person name="Upadhyay S."/>
            <person name="Ikawa M."/>
            <person name="Clement T.M."/>
        </authorList>
    </citation>
    <scope>FUNCTION</scope>
    <scope>SUBCELLULAR LOCATION</scope>
    <scope>TISSUE SPECIFICITY</scope>
    <scope>DISRUPTION PHENOTYPE</scope>
</reference>
<reference key="14">
    <citation type="journal article" date="2023" name="Reprod. Biol. Endocrinol.">
        <title>Loss of ACTL7A causes small head sperm by defective acrosome-acroplaxome-manchette complex.</title>
        <authorList>
            <person name="Zhang Y."/>
            <person name="Tang J."/>
            <person name="Wang X."/>
            <person name="Sun Y."/>
            <person name="Yang T."/>
            <person name="Shen X."/>
            <person name="Yang X."/>
            <person name="Shi H."/>
            <person name="Sun X."/>
            <person name="Xin A."/>
        </authorList>
    </citation>
    <scope>FUNCTION</scope>
    <scope>DISRUPTION PHENOTYPE</scope>
</reference>
<reference key="15">
    <citation type="journal article" date="2024" name="Elife">
        <title>Disruption in CYLC1 leads to acrosome detachment, sperm head deformity, and male in/subfertility in humans and mice.</title>
        <authorList>
            <person name="Jin H.J."/>
            <person name="Fan Y."/>
            <person name="Yang X."/>
            <person name="Dong Y."/>
            <person name="Zhang X.Z."/>
            <person name="Geng X.Y."/>
            <person name="Yan Z."/>
            <person name="Wu L."/>
            <person name="Ma M."/>
            <person name="Li B."/>
            <person name="Lyu Q."/>
            <person name="Pan Y."/>
            <person name="Liu M."/>
            <person name="Kuang Y."/>
            <person name="Chen S.R."/>
        </authorList>
    </citation>
    <scope>INTERACTION WITH CYLC1</scope>
</reference>
<protein>
    <recommendedName>
        <fullName>Actin-like protein 7A</fullName>
    </recommendedName>
    <alternativeName>
        <fullName>Actin-like-7-alpha</fullName>
    </alternativeName>
    <alternativeName>
        <fullName>Testis-specific actin-2</fullName>
        <shortName>T-actin-2</shortName>
    </alternativeName>
</protein>
<evidence type="ECO:0000250" key="1">
    <source>
        <dbReference type="UniProtKB" id="Q9Y615"/>
    </source>
</evidence>
<evidence type="ECO:0000256" key="2">
    <source>
        <dbReference type="SAM" id="MobiDB-lite"/>
    </source>
</evidence>
<evidence type="ECO:0000269" key="3">
    <source>
    </source>
</evidence>
<evidence type="ECO:0000269" key="4">
    <source>
    </source>
</evidence>
<evidence type="ECO:0000269" key="5">
    <source>
    </source>
</evidence>
<evidence type="ECO:0000269" key="6">
    <source>
    </source>
</evidence>
<evidence type="ECO:0000269" key="7">
    <source>
    </source>
</evidence>
<evidence type="ECO:0000269" key="8">
    <source>
    </source>
</evidence>
<evidence type="ECO:0000269" key="9">
    <source>
    </source>
</evidence>
<evidence type="ECO:0000269" key="10">
    <source>
    </source>
</evidence>
<evidence type="ECO:0000305" key="11"/>